<sequence length="139" mass="14373">MKFSIAAAVLALASAVVAHPGAGYVSTPEKEANFQQNFQKFVTACGNGNQVSCCNTETKKVGAPLTAGGLIPILDNINLEDFSLLKGCSKVDVAAVIGVQDLLNSNCKTQVSCCKVGDTNQVGLVNANVDLKCAAQNII</sequence>
<proteinExistence type="evidence at protein level"/>
<reference key="1">
    <citation type="journal article" date="2011" name="Genome Biol.">
        <title>Comparative and functional genomics provide insights into the pathogenicity of dermatophytic fungi.</title>
        <authorList>
            <person name="Burmester A."/>
            <person name="Shelest E."/>
            <person name="Gloeckner G."/>
            <person name="Heddergott C."/>
            <person name="Schindler S."/>
            <person name="Staib P."/>
            <person name="Heidel A."/>
            <person name="Felder M."/>
            <person name="Petzold A."/>
            <person name="Szafranski K."/>
            <person name="Feuermann M."/>
            <person name="Pedruzzi I."/>
            <person name="Priebe S."/>
            <person name="Groth M."/>
            <person name="Winkler R."/>
            <person name="Li W."/>
            <person name="Kniemeyer O."/>
            <person name="Schroeckh V."/>
            <person name="Hertweck C."/>
            <person name="Hube B."/>
            <person name="White T.C."/>
            <person name="Platzer M."/>
            <person name="Guthke R."/>
            <person name="Heitman J."/>
            <person name="Woestemeyer J."/>
            <person name="Zipfel P.F."/>
            <person name="Monod M."/>
            <person name="Brakhage A.A."/>
        </authorList>
    </citation>
    <scope>NUCLEOTIDE SEQUENCE [LARGE SCALE GENOMIC DNA]</scope>
    <source>
        <strain>ATCC MYA-4681 / CBS 112371</strain>
    </source>
</reference>
<reference key="2">
    <citation type="journal article" date="2012" name="Eukaryot. Cell">
        <title>The Arthroderma benhamiae hydrophobin HypA mediates hydrophobicity and influences recognition by human immune effector cells.</title>
        <authorList>
            <person name="Heddergott C."/>
            <person name="Bruns S."/>
            <person name="Nietzsche S."/>
            <person name="Leonhardt I."/>
            <person name="Kurzai O."/>
            <person name="Kniemeyer O."/>
            <person name="Brakhage A.A."/>
        </authorList>
    </citation>
    <scope>IDENTIFICATION BY MASS SPECTROMETRY</scope>
    <scope>SUBCELLULAR LOCATION</scope>
    <scope>DISRUPTION PHENOTYPE</scope>
    <scope>FUNCTION</scope>
</reference>
<gene>
    <name evidence="4" type="primary">HYPA</name>
    <name type="ORF">ARB_06975</name>
</gene>
<feature type="signal peptide" evidence="2">
    <location>
        <begin position="1"/>
        <end position="18"/>
    </location>
</feature>
<feature type="chain" id="PRO_0000431985" description="Class I hydrophobin A" evidence="2">
    <location>
        <begin position="19"/>
        <end position="139"/>
    </location>
</feature>
<feature type="disulfide bond" evidence="1">
    <location>
        <begin position="45"/>
        <end position="113"/>
    </location>
</feature>
<feature type="disulfide bond" evidence="1">
    <location>
        <begin position="53"/>
        <end position="107"/>
    </location>
</feature>
<feature type="disulfide bond" evidence="1">
    <location>
        <begin position="54"/>
        <end position="88"/>
    </location>
</feature>
<feature type="disulfide bond" evidence="1">
    <location>
        <begin position="114"/>
        <end position="133"/>
    </location>
</feature>
<protein>
    <recommendedName>
        <fullName evidence="4">Class I hydrophobin A</fullName>
    </recommendedName>
</protein>
<keyword id="KW-0134">Cell wall</keyword>
<keyword id="KW-1015">Disulfide bond</keyword>
<keyword id="KW-1185">Reference proteome</keyword>
<keyword id="KW-0964">Secreted</keyword>
<keyword id="KW-0732">Signal</keyword>
<keyword id="KW-0843">Virulence</keyword>
<comment type="function">
    <text evidence="3 5">Aerial growth, conidiation, and dispersal of filamentous fungi in the environment rely upon a capability of their secreting small amphipathic proteins called hydrophobins (HPBs) with low sequence identity. Class I can self-assemble into an outermost layer of rodlet bundles on aerial cell surfaces, conferring cellular hydrophobicity that supports fungal growth, development and dispersal; whereas Class II form highly ordered films at water-air interfaces through intermolecular interactions but contribute nothing to the rodlet structure (Probable). HYPA is a class I hydrophobin that contributes to surface hydrophobicity, and prevents recognition by the cellular immune defense system.</text>
</comment>
<comment type="subunit">
    <text evidence="1">Self-assembles to form functional amyloid fibrils called rodlets. Self-assembly into fibrillar rodlets occurs spontaneously at hydrophobic:hydrophilic interfaces and the rodlets further associate laterally to form amphipathic monolayers.</text>
</comment>
<comment type="subcellular location">
    <subcellularLocation>
        <location evidence="3">Secreted</location>
    </subcellularLocation>
    <subcellularLocation>
        <location evidence="3">Secreted</location>
        <location evidence="3">Cell wall</location>
    </subcellularLocation>
</comment>
<comment type="disruption phenotype">
    <text evidence="3">Leads to a 'wettable' phenotype with drops of water attaching to the mycelium, whereas water drops off the wild-type colonies (PubMed:22408226). Conidia show a strongly reduced tendency to float at the water-air interface of conidial suspensions (PubMed:22408226). Triggers an increased activation of human neutrophil granulocytes and dendritic cells, characterized by an increased release of the immune mediators interleukin-6 (IL-6), IL-8, IL-10, and tumor necrosis factor alpha (TNF-alpha) (PubMed:22408226).</text>
</comment>
<comment type="similarity">
    <text evidence="5">Belongs to the fungal hydrophobin family.</text>
</comment>
<dbReference type="EMBL" id="ABSU01000007">
    <property type="protein sequence ID" value="EFE34024.1"/>
    <property type="molecule type" value="Genomic_DNA"/>
</dbReference>
<dbReference type="RefSeq" id="XP_003014413.1">
    <property type="nucleotide sequence ID" value="XM_003014367.1"/>
</dbReference>
<dbReference type="GeneID" id="9520465"/>
<dbReference type="KEGG" id="abe:ARB_06975"/>
<dbReference type="eggNOG" id="ENOG502T10M">
    <property type="taxonomic scope" value="Eukaryota"/>
</dbReference>
<dbReference type="HOGENOM" id="CLU_106380_1_0_1"/>
<dbReference type="OMA" id="GAHMSCC"/>
<dbReference type="OrthoDB" id="4225815at2759"/>
<dbReference type="Proteomes" id="UP000008866">
    <property type="component" value="Unassembled WGS sequence"/>
</dbReference>
<dbReference type="GO" id="GO:0005576">
    <property type="term" value="C:extracellular region"/>
    <property type="evidence" value="ECO:0007669"/>
    <property type="project" value="UniProtKB-KW"/>
</dbReference>
<dbReference type="GO" id="GO:0009277">
    <property type="term" value="C:fungal-type cell wall"/>
    <property type="evidence" value="ECO:0007669"/>
    <property type="project" value="InterPro"/>
</dbReference>
<dbReference type="GO" id="GO:0005199">
    <property type="term" value="F:structural constituent of cell wall"/>
    <property type="evidence" value="ECO:0007669"/>
    <property type="project" value="InterPro"/>
</dbReference>
<dbReference type="CDD" id="cd23507">
    <property type="entry name" value="hydrophobin_I"/>
    <property type="match status" value="1"/>
</dbReference>
<dbReference type="InterPro" id="IPR001338">
    <property type="entry name" value="Hydrophobin"/>
</dbReference>
<dbReference type="InterPro" id="IPR019778">
    <property type="entry name" value="Hydrophobin_CS"/>
</dbReference>
<dbReference type="Pfam" id="PF01185">
    <property type="entry name" value="Hydrophobin"/>
    <property type="match status" value="1"/>
</dbReference>
<dbReference type="SMART" id="SM00075">
    <property type="entry name" value="HYDRO"/>
    <property type="match status" value="1"/>
</dbReference>
<dbReference type="PROSITE" id="PS00956">
    <property type="entry name" value="HYDROPHOBIN"/>
    <property type="match status" value="1"/>
</dbReference>
<accession>D4ARW0</accession>
<evidence type="ECO:0000250" key="1">
    <source>
        <dbReference type="UniProtKB" id="Q04571"/>
    </source>
</evidence>
<evidence type="ECO:0000255" key="2"/>
<evidence type="ECO:0000269" key="3">
    <source>
    </source>
</evidence>
<evidence type="ECO:0000303" key="4">
    <source>
    </source>
</evidence>
<evidence type="ECO:0000305" key="5"/>
<organism>
    <name type="scientific">Arthroderma benhamiae (strain ATCC MYA-4681 / CBS 112371)</name>
    <name type="common">Trichophyton mentagrophytes</name>
    <dbReference type="NCBI Taxonomy" id="663331"/>
    <lineage>
        <taxon>Eukaryota</taxon>
        <taxon>Fungi</taxon>
        <taxon>Dikarya</taxon>
        <taxon>Ascomycota</taxon>
        <taxon>Pezizomycotina</taxon>
        <taxon>Eurotiomycetes</taxon>
        <taxon>Eurotiomycetidae</taxon>
        <taxon>Onygenales</taxon>
        <taxon>Arthrodermataceae</taxon>
        <taxon>Trichophyton</taxon>
    </lineage>
</organism>
<name>HYPA_ARTBC</name>